<gene>
    <name evidence="1" type="primary">surE</name>
    <name type="ordered locus">Plav_3031</name>
</gene>
<organism>
    <name type="scientific">Parvibaculum lavamentivorans (strain DS-1 / DSM 13023 / NCIMB 13966)</name>
    <dbReference type="NCBI Taxonomy" id="402881"/>
    <lineage>
        <taxon>Bacteria</taxon>
        <taxon>Pseudomonadati</taxon>
        <taxon>Pseudomonadota</taxon>
        <taxon>Alphaproteobacteria</taxon>
        <taxon>Hyphomicrobiales</taxon>
        <taxon>Parvibaculaceae</taxon>
        <taxon>Parvibaculum</taxon>
    </lineage>
</organism>
<dbReference type="EC" id="3.1.3.5" evidence="1"/>
<dbReference type="EMBL" id="CP000774">
    <property type="protein sequence ID" value="ABS64638.1"/>
    <property type="molecule type" value="Genomic_DNA"/>
</dbReference>
<dbReference type="SMR" id="A7HXK5"/>
<dbReference type="STRING" id="402881.Plav_3031"/>
<dbReference type="KEGG" id="pla:Plav_3031"/>
<dbReference type="eggNOG" id="COG0496">
    <property type="taxonomic scope" value="Bacteria"/>
</dbReference>
<dbReference type="HOGENOM" id="CLU_045192_1_2_5"/>
<dbReference type="OrthoDB" id="9780815at2"/>
<dbReference type="Proteomes" id="UP000006377">
    <property type="component" value="Chromosome"/>
</dbReference>
<dbReference type="GO" id="GO:0005737">
    <property type="term" value="C:cytoplasm"/>
    <property type="evidence" value="ECO:0007669"/>
    <property type="project" value="UniProtKB-SubCell"/>
</dbReference>
<dbReference type="GO" id="GO:0008254">
    <property type="term" value="F:3'-nucleotidase activity"/>
    <property type="evidence" value="ECO:0007669"/>
    <property type="project" value="TreeGrafter"/>
</dbReference>
<dbReference type="GO" id="GO:0008253">
    <property type="term" value="F:5'-nucleotidase activity"/>
    <property type="evidence" value="ECO:0007669"/>
    <property type="project" value="UniProtKB-UniRule"/>
</dbReference>
<dbReference type="GO" id="GO:0004309">
    <property type="term" value="F:exopolyphosphatase activity"/>
    <property type="evidence" value="ECO:0007669"/>
    <property type="project" value="TreeGrafter"/>
</dbReference>
<dbReference type="GO" id="GO:0046872">
    <property type="term" value="F:metal ion binding"/>
    <property type="evidence" value="ECO:0007669"/>
    <property type="project" value="UniProtKB-UniRule"/>
</dbReference>
<dbReference type="GO" id="GO:0000166">
    <property type="term" value="F:nucleotide binding"/>
    <property type="evidence" value="ECO:0007669"/>
    <property type="project" value="UniProtKB-KW"/>
</dbReference>
<dbReference type="FunFam" id="3.40.1210.10:FF:000001">
    <property type="entry name" value="5'/3'-nucleotidase SurE"/>
    <property type="match status" value="1"/>
</dbReference>
<dbReference type="Gene3D" id="3.40.1210.10">
    <property type="entry name" value="Survival protein SurE-like phosphatase/nucleotidase"/>
    <property type="match status" value="1"/>
</dbReference>
<dbReference type="HAMAP" id="MF_00060">
    <property type="entry name" value="SurE"/>
    <property type="match status" value="1"/>
</dbReference>
<dbReference type="InterPro" id="IPR030048">
    <property type="entry name" value="SurE"/>
</dbReference>
<dbReference type="InterPro" id="IPR002828">
    <property type="entry name" value="SurE-like_Pase/nucleotidase"/>
</dbReference>
<dbReference type="InterPro" id="IPR036523">
    <property type="entry name" value="SurE-like_sf"/>
</dbReference>
<dbReference type="NCBIfam" id="NF001490">
    <property type="entry name" value="PRK00346.1-4"/>
    <property type="match status" value="1"/>
</dbReference>
<dbReference type="NCBIfam" id="TIGR00087">
    <property type="entry name" value="surE"/>
    <property type="match status" value="1"/>
</dbReference>
<dbReference type="PANTHER" id="PTHR30457">
    <property type="entry name" value="5'-NUCLEOTIDASE SURE"/>
    <property type="match status" value="1"/>
</dbReference>
<dbReference type="PANTHER" id="PTHR30457:SF12">
    <property type="entry name" value="5'_3'-NUCLEOTIDASE SURE"/>
    <property type="match status" value="1"/>
</dbReference>
<dbReference type="Pfam" id="PF01975">
    <property type="entry name" value="SurE"/>
    <property type="match status" value="1"/>
</dbReference>
<dbReference type="SUPFAM" id="SSF64167">
    <property type="entry name" value="SurE-like"/>
    <property type="match status" value="1"/>
</dbReference>
<evidence type="ECO:0000255" key="1">
    <source>
        <dbReference type="HAMAP-Rule" id="MF_00060"/>
    </source>
</evidence>
<sequence length="277" mass="30326">MAKSGTKSLRILVTNDDGIHAPGLKVLEKIAHKLSRDVWVVAPEDEQSGSAHSLSLANPLRVRKLTARKYAVRGTPSDCVLMAVRHILKDEQPDLVVSGINRGQNIADDVTYSGTIAAAMEGTQLGIPSIALSQAFGFSGSANVKWSTAEHFAPDILKKLIAAGWPEEVLININFPDVVPGSVTGIEVTRQGKRDQSLVRVEERIDARNNPYYWLGFERILSNPPQGTDLRAIYESRISITPLHMDLTHQKTAKALNDALGTLAQPKRRPRSASRKK</sequence>
<accession>A7HXK5</accession>
<keyword id="KW-0963">Cytoplasm</keyword>
<keyword id="KW-0378">Hydrolase</keyword>
<keyword id="KW-0479">Metal-binding</keyword>
<keyword id="KW-0547">Nucleotide-binding</keyword>
<keyword id="KW-1185">Reference proteome</keyword>
<feature type="chain" id="PRO_0000335266" description="5'-nucleotidase SurE">
    <location>
        <begin position="1"/>
        <end position="277"/>
    </location>
</feature>
<feature type="binding site" evidence="1">
    <location>
        <position position="16"/>
    </location>
    <ligand>
        <name>a divalent metal cation</name>
        <dbReference type="ChEBI" id="CHEBI:60240"/>
    </ligand>
</feature>
<feature type="binding site" evidence="1">
    <location>
        <position position="17"/>
    </location>
    <ligand>
        <name>a divalent metal cation</name>
        <dbReference type="ChEBI" id="CHEBI:60240"/>
    </ligand>
</feature>
<feature type="binding site" evidence="1">
    <location>
        <position position="48"/>
    </location>
    <ligand>
        <name>a divalent metal cation</name>
        <dbReference type="ChEBI" id="CHEBI:60240"/>
    </ligand>
</feature>
<feature type="binding site" evidence="1">
    <location>
        <position position="101"/>
    </location>
    <ligand>
        <name>a divalent metal cation</name>
        <dbReference type="ChEBI" id="CHEBI:60240"/>
    </ligand>
</feature>
<comment type="function">
    <text evidence="1">Nucleotidase that shows phosphatase activity on nucleoside 5'-monophosphates.</text>
</comment>
<comment type="catalytic activity">
    <reaction evidence="1">
        <text>a ribonucleoside 5'-phosphate + H2O = a ribonucleoside + phosphate</text>
        <dbReference type="Rhea" id="RHEA:12484"/>
        <dbReference type="ChEBI" id="CHEBI:15377"/>
        <dbReference type="ChEBI" id="CHEBI:18254"/>
        <dbReference type="ChEBI" id="CHEBI:43474"/>
        <dbReference type="ChEBI" id="CHEBI:58043"/>
        <dbReference type="EC" id="3.1.3.5"/>
    </reaction>
</comment>
<comment type="cofactor">
    <cofactor evidence="1">
        <name>a divalent metal cation</name>
        <dbReference type="ChEBI" id="CHEBI:60240"/>
    </cofactor>
    <text evidence="1">Binds 1 divalent metal cation per subunit.</text>
</comment>
<comment type="subcellular location">
    <subcellularLocation>
        <location evidence="1">Cytoplasm</location>
    </subcellularLocation>
</comment>
<comment type="similarity">
    <text evidence="1">Belongs to the SurE nucleotidase family.</text>
</comment>
<reference key="1">
    <citation type="journal article" date="2011" name="Stand. Genomic Sci.">
        <title>Complete genome sequence of Parvibaculum lavamentivorans type strain (DS-1(T)).</title>
        <authorList>
            <person name="Schleheck D."/>
            <person name="Weiss M."/>
            <person name="Pitluck S."/>
            <person name="Bruce D."/>
            <person name="Land M.L."/>
            <person name="Han S."/>
            <person name="Saunders E."/>
            <person name="Tapia R."/>
            <person name="Detter C."/>
            <person name="Brettin T."/>
            <person name="Han J."/>
            <person name="Woyke T."/>
            <person name="Goodwin L."/>
            <person name="Pennacchio L."/>
            <person name="Nolan M."/>
            <person name="Cook A.M."/>
            <person name="Kjelleberg S."/>
            <person name="Thomas T."/>
        </authorList>
    </citation>
    <scope>NUCLEOTIDE SEQUENCE [LARGE SCALE GENOMIC DNA]</scope>
    <source>
        <strain>DS-1 / DSM 13023 / NCIMB 13966</strain>
    </source>
</reference>
<name>SURE_PARL1</name>
<proteinExistence type="inferred from homology"/>
<protein>
    <recommendedName>
        <fullName evidence="1">5'-nucleotidase SurE</fullName>
        <ecNumber evidence="1">3.1.3.5</ecNumber>
    </recommendedName>
    <alternativeName>
        <fullName evidence="1">Nucleoside 5'-monophosphate phosphohydrolase</fullName>
    </alternativeName>
</protein>